<comment type="function">
    <text evidence="1">Catalyzes the NADPH-dependent reduction of N-acetyl-5-glutamyl phosphate to yield N-acetyl-L-glutamate 5-semialdehyde.</text>
</comment>
<comment type="catalytic activity">
    <reaction evidence="1">
        <text>N-acetyl-L-glutamate 5-semialdehyde + phosphate + NADP(+) = N-acetyl-L-glutamyl 5-phosphate + NADPH + H(+)</text>
        <dbReference type="Rhea" id="RHEA:21588"/>
        <dbReference type="ChEBI" id="CHEBI:15378"/>
        <dbReference type="ChEBI" id="CHEBI:29123"/>
        <dbReference type="ChEBI" id="CHEBI:43474"/>
        <dbReference type="ChEBI" id="CHEBI:57783"/>
        <dbReference type="ChEBI" id="CHEBI:57936"/>
        <dbReference type="ChEBI" id="CHEBI:58349"/>
        <dbReference type="EC" id="1.2.1.38"/>
    </reaction>
</comment>
<comment type="pathway">
    <text evidence="1">Amino-acid biosynthesis; L-arginine biosynthesis; N(2)-acetyl-L-ornithine from L-glutamate: step 3/4.</text>
</comment>
<comment type="subcellular location">
    <subcellularLocation>
        <location evidence="1">Cytoplasm</location>
    </subcellularLocation>
</comment>
<comment type="similarity">
    <text evidence="1">Belongs to the NAGSA dehydrogenase family. Type 1 subfamily.</text>
</comment>
<proteinExistence type="inferred from homology"/>
<protein>
    <recommendedName>
        <fullName evidence="1">N-acetyl-gamma-glutamyl-phosphate reductase</fullName>
        <shortName evidence="1">AGPR</shortName>
        <ecNumber evidence="1">1.2.1.38</ecNumber>
    </recommendedName>
    <alternativeName>
        <fullName evidence="1">N-acetyl-glutamate semialdehyde dehydrogenase</fullName>
        <shortName evidence="1">NAGSA dehydrogenase</shortName>
    </alternativeName>
</protein>
<gene>
    <name evidence="1" type="primary">argC</name>
    <name type="ordered locus">MT1690</name>
</gene>
<organism>
    <name type="scientific">Mycobacterium tuberculosis (strain CDC 1551 / Oshkosh)</name>
    <dbReference type="NCBI Taxonomy" id="83331"/>
    <lineage>
        <taxon>Bacteria</taxon>
        <taxon>Bacillati</taxon>
        <taxon>Actinomycetota</taxon>
        <taxon>Actinomycetes</taxon>
        <taxon>Mycobacteriales</taxon>
        <taxon>Mycobacteriaceae</taxon>
        <taxon>Mycobacterium</taxon>
        <taxon>Mycobacterium tuberculosis complex</taxon>
    </lineage>
</organism>
<keyword id="KW-0028">Amino-acid biosynthesis</keyword>
<keyword id="KW-0055">Arginine biosynthesis</keyword>
<keyword id="KW-0963">Cytoplasm</keyword>
<keyword id="KW-0521">NADP</keyword>
<keyword id="KW-0560">Oxidoreductase</keyword>
<keyword id="KW-1185">Reference proteome</keyword>
<sequence length="352" mass="36304">MQNRQVANATKVAVAGASGYAGGEILRLLLGHPAYADGRLRIGALTAATSAGSTLGEHHPHLTPLAHRVVEPTEAAVLGGHDAVFLALPHGHSAVLAQQLSPETLIIDCGADFRLTDAAVWERFYGSSHAGSWPYGLPELPGARDQLRGTRRIAVPGCYPTAALLALFPALAADLIEPAVTVVAVSGTSGAGRAATTDLLGAEVIGSARAYNIAGVHRHTPEIAQGLRAVTDRDVSVSFTPVLIPASRGILATCTARTRSPLSQLRAAYEKAYHAEPFIYLMPEGQLPRTGAVIGSNAAHIAVAVDEDAQTFVAIAAIDNLVKGTAGAAVQSMNLALGWPETDGLSVVGVAP</sequence>
<name>ARGC_MYCTO</name>
<evidence type="ECO:0000255" key="1">
    <source>
        <dbReference type="HAMAP-Rule" id="MF_00150"/>
    </source>
</evidence>
<accession>P9WPZ8</accession>
<accession>L0T7J2</accession>
<accession>P63562</accession>
<accession>P94987</accession>
<reference key="1">
    <citation type="journal article" date="2002" name="J. Bacteriol.">
        <title>Whole-genome comparison of Mycobacterium tuberculosis clinical and laboratory strains.</title>
        <authorList>
            <person name="Fleischmann R.D."/>
            <person name="Alland D."/>
            <person name="Eisen J.A."/>
            <person name="Carpenter L."/>
            <person name="White O."/>
            <person name="Peterson J.D."/>
            <person name="DeBoy R.T."/>
            <person name="Dodson R.J."/>
            <person name="Gwinn M.L."/>
            <person name="Haft D.H."/>
            <person name="Hickey E.K."/>
            <person name="Kolonay J.F."/>
            <person name="Nelson W.C."/>
            <person name="Umayam L.A."/>
            <person name="Ermolaeva M.D."/>
            <person name="Salzberg S.L."/>
            <person name="Delcher A."/>
            <person name="Utterback T.R."/>
            <person name="Weidman J.F."/>
            <person name="Khouri H.M."/>
            <person name="Gill J."/>
            <person name="Mikula A."/>
            <person name="Bishai W."/>
            <person name="Jacobs W.R. Jr."/>
            <person name="Venter J.C."/>
            <person name="Fraser C.M."/>
        </authorList>
    </citation>
    <scope>NUCLEOTIDE SEQUENCE [LARGE SCALE GENOMIC DNA]</scope>
    <source>
        <strain>CDC 1551 / Oshkosh</strain>
    </source>
</reference>
<feature type="chain" id="PRO_0000426863" description="N-acetyl-gamma-glutamyl-phosphate reductase">
    <location>
        <begin position="1"/>
        <end position="352"/>
    </location>
</feature>
<feature type="active site" evidence="1">
    <location>
        <position position="158"/>
    </location>
</feature>
<dbReference type="EC" id="1.2.1.38" evidence="1"/>
<dbReference type="EMBL" id="AE000516">
    <property type="protein sequence ID" value="AAK45959.1"/>
    <property type="molecule type" value="Genomic_DNA"/>
</dbReference>
<dbReference type="PIR" id="G70620">
    <property type="entry name" value="G70620"/>
</dbReference>
<dbReference type="RefSeq" id="WP_003898960.1">
    <property type="nucleotide sequence ID" value="NZ_KK341227.1"/>
</dbReference>
<dbReference type="SMR" id="P9WPZ8"/>
<dbReference type="GeneID" id="45425622"/>
<dbReference type="KEGG" id="mtc:MT1690"/>
<dbReference type="PATRIC" id="fig|83331.31.peg.1817"/>
<dbReference type="HOGENOM" id="CLU_006384_0_0_11"/>
<dbReference type="UniPathway" id="UPA00068">
    <property type="reaction ID" value="UER00108"/>
</dbReference>
<dbReference type="Proteomes" id="UP000001020">
    <property type="component" value="Chromosome"/>
</dbReference>
<dbReference type="GO" id="GO:0005737">
    <property type="term" value="C:cytoplasm"/>
    <property type="evidence" value="ECO:0007669"/>
    <property type="project" value="UniProtKB-SubCell"/>
</dbReference>
<dbReference type="GO" id="GO:0003942">
    <property type="term" value="F:N-acetyl-gamma-glutamyl-phosphate reductase activity"/>
    <property type="evidence" value="ECO:0007669"/>
    <property type="project" value="UniProtKB-UniRule"/>
</dbReference>
<dbReference type="GO" id="GO:0051287">
    <property type="term" value="F:NAD binding"/>
    <property type="evidence" value="ECO:0007669"/>
    <property type="project" value="InterPro"/>
</dbReference>
<dbReference type="GO" id="GO:0070401">
    <property type="term" value="F:NADP+ binding"/>
    <property type="evidence" value="ECO:0007669"/>
    <property type="project" value="InterPro"/>
</dbReference>
<dbReference type="GO" id="GO:0006526">
    <property type="term" value="P:L-arginine biosynthetic process"/>
    <property type="evidence" value="ECO:0007669"/>
    <property type="project" value="UniProtKB-UniRule"/>
</dbReference>
<dbReference type="CDD" id="cd24148">
    <property type="entry name" value="AGPR_1_actinobacAGPR_like"/>
    <property type="match status" value="1"/>
</dbReference>
<dbReference type="CDD" id="cd23934">
    <property type="entry name" value="AGPR_1_C"/>
    <property type="match status" value="1"/>
</dbReference>
<dbReference type="FunFam" id="3.30.360.10:FF:000014">
    <property type="entry name" value="N-acetyl-gamma-glutamyl-phosphate reductase"/>
    <property type="match status" value="1"/>
</dbReference>
<dbReference type="Gene3D" id="3.30.360.10">
    <property type="entry name" value="Dihydrodipicolinate Reductase, domain 2"/>
    <property type="match status" value="1"/>
</dbReference>
<dbReference type="Gene3D" id="3.40.50.720">
    <property type="entry name" value="NAD(P)-binding Rossmann-like Domain"/>
    <property type="match status" value="1"/>
</dbReference>
<dbReference type="HAMAP" id="MF_00150">
    <property type="entry name" value="ArgC_type1"/>
    <property type="match status" value="1"/>
</dbReference>
<dbReference type="InterPro" id="IPR023013">
    <property type="entry name" value="AGPR_AS"/>
</dbReference>
<dbReference type="InterPro" id="IPR000706">
    <property type="entry name" value="AGPR_type-1"/>
</dbReference>
<dbReference type="InterPro" id="IPR036291">
    <property type="entry name" value="NAD(P)-bd_dom_sf"/>
</dbReference>
<dbReference type="InterPro" id="IPR050085">
    <property type="entry name" value="NAGSA_dehydrogenase"/>
</dbReference>
<dbReference type="InterPro" id="IPR000534">
    <property type="entry name" value="Semialdehyde_DH_NAD-bd"/>
</dbReference>
<dbReference type="NCBIfam" id="TIGR01850">
    <property type="entry name" value="argC"/>
    <property type="match status" value="1"/>
</dbReference>
<dbReference type="PANTHER" id="PTHR32338:SF10">
    <property type="entry name" value="N-ACETYL-GAMMA-GLUTAMYL-PHOSPHATE REDUCTASE, CHLOROPLASTIC-RELATED"/>
    <property type="match status" value="1"/>
</dbReference>
<dbReference type="PANTHER" id="PTHR32338">
    <property type="entry name" value="N-ACETYL-GAMMA-GLUTAMYL-PHOSPHATE REDUCTASE, CHLOROPLASTIC-RELATED-RELATED"/>
    <property type="match status" value="1"/>
</dbReference>
<dbReference type="Pfam" id="PF01118">
    <property type="entry name" value="Semialdhyde_dh"/>
    <property type="match status" value="1"/>
</dbReference>
<dbReference type="Pfam" id="PF22698">
    <property type="entry name" value="Semialdhyde_dhC_1"/>
    <property type="match status" value="1"/>
</dbReference>
<dbReference type="SMART" id="SM00859">
    <property type="entry name" value="Semialdhyde_dh"/>
    <property type="match status" value="1"/>
</dbReference>
<dbReference type="SUPFAM" id="SSF55347">
    <property type="entry name" value="Glyceraldehyde-3-phosphate dehydrogenase-like, C-terminal domain"/>
    <property type="match status" value="1"/>
</dbReference>
<dbReference type="SUPFAM" id="SSF51735">
    <property type="entry name" value="NAD(P)-binding Rossmann-fold domains"/>
    <property type="match status" value="1"/>
</dbReference>
<dbReference type="PROSITE" id="PS01224">
    <property type="entry name" value="ARGC"/>
    <property type="match status" value="1"/>
</dbReference>